<name>TRMD_RHIEC</name>
<sequence length="233" mass="25678">MAFRARVLTLYPEMFPGHLGFSLAGKAMERGQWSLDLVQIRDFATDRHRTVDDTPAGGGAGMVLKADVLARAIDSAGENDPRPRLLMSPRGRPLTQQRVRELAAGDGVVIVCGRFEGVDQRVIEARGLEEVSVGDYVLSGGEPAALIVLDAIIRILPGVMGNDLSGLHESFEGGLLEHPHYTRPQEWEGREIPSILTSGNHGAIEKWRHEEAVRLTRERRPDLFEKVESEKNG</sequence>
<organism>
    <name type="scientific">Rhizobium etli (strain ATCC 51251 / DSM 11541 / JCM 21823 / NBRC 15573 / CFN 42)</name>
    <dbReference type="NCBI Taxonomy" id="347834"/>
    <lineage>
        <taxon>Bacteria</taxon>
        <taxon>Pseudomonadati</taxon>
        <taxon>Pseudomonadota</taxon>
        <taxon>Alphaproteobacteria</taxon>
        <taxon>Hyphomicrobiales</taxon>
        <taxon>Rhizobiaceae</taxon>
        <taxon>Rhizobium/Agrobacterium group</taxon>
        <taxon>Rhizobium</taxon>
    </lineage>
</organism>
<reference key="1">
    <citation type="journal article" date="2006" name="Proc. Natl. Acad. Sci. U.S.A.">
        <title>The partitioned Rhizobium etli genome: genetic and metabolic redundancy in seven interacting replicons.</title>
        <authorList>
            <person name="Gonzalez V."/>
            <person name="Santamaria R.I."/>
            <person name="Bustos P."/>
            <person name="Hernandez-Gonzalez I."/>
            <person name="Medrano-Soto A."/>
            <person name="Moreno-Hagelsieb G."/>
            <person name="Janga S.C."/>
            <person name="Ramirez M.A."/>
            <person name="Jimenez-Jacinto V."/>
            <person name="Collado-Vides J."/>
            <person name="Davila G."/>
        </authorList>
    </citation>
    <scope>NUCLEOTIDE SEQUENCE [LARGE SCALE GENOMIC DNA]</scope>
    <source>
        <strain>ATCC 51251 / DSM 11541 / JCM 21823 / NBRC 15573 / CFN 42</strain>
    </source>
</reference>
<evidence type="ECO:0000255" key="1">
    <source>
        <dbReference type="HAMAP-Rule" id="MF_00605"/>
    </source>
</evidence>
<evidence type="ECO:0000305" key="2"/>
<protein>
    <recommendedName>
        <fullName evidence="1">tRNA (guanine-N(1)-)-methyltransferase</fullName>
        <ecNumber evidence="1">2.1.1.228</ecNumber>
    </recommendedName>
    <alternativeName>
        <fullName evidence="1">M1G-methyltransferase</fullName>
    </alternativeName>
    <alternativeName>
        <fullName evidence="1">tRNA [GM37] methyltransferase</fullName>
    </alternativeName>
</protein>
<feature type="chain" id="PRO_0000257455" description="tRNA (guanine-N(1)-)-methyltransferase">
    <location>
        <begin position="1"/>
        <end position="233"/>
    </location>
</feature>
<feature type="binding site" evidence="1">
    <location>
        <position position="113"/>
    </location>
    <ligand>
        <name>S-adenosyl-L-methionine</name>
        <dbReference type="ChEBI" id="CHEBI:59789"/>
    </ligand>
</feature>
<feature type="binding site" evidence="1">
    <location>
        <begin position="133"/>
        <end position="138"/>
    </location>
    <ligand>
        <name>S-adenosyl-L-methionine</name>
        <dbReference type="ChEBI" id="CHEBI:59789"/>
    </ligand>
</feature>
<accession>Q2K380</accession>
<dbReference type="EC" id="2.1.1.228" evidence="1"/>
<dbReference type="EMBL" id="CP000133">
    <property type="protein sequence ID" value="ABC92706.1"/>
    <property type="status" value="ALT_INIT"/>
    <property type="molecule type" value="Genomic_DNA"/>
</dbReference>
<dbReference type="RefSeq" id="WP_042119088.1">
    <property type="nucleotide sequence ID" value="NC_007761.1"/>
</dbReference>
<dbReference type="SMR" id="Q2K380"/>
<dbReference type="KEGG" id="ret:RHE_CH03961"/>
<dbReference type="eggNOG" id="COG0336">
    <property type="taxonomic scope" value="Bacteria"/>
</dbReference>
<dbReference type="HOGENOM" id="CLU_047363_0_1_5"/>
<dbReference type="OrthoDB" id="9807416at2"/>
<dbReference type="Proteomes" id="UP000001936">
    <property type="component" value="Chromosome"/>
</dbReference>
<dbReference type="GO" id="GO:0005829">
    <property type="term" value="C:cytosol"/>
    <property type="evidence" value="ECO:0007669"/>
    <property type="project" value="TreeGrafter"/>
</dbReference>
<dbReference type="GO" id="GO:0052906">
    <property type="term" value="F:tRNA (guanine(37)-N1)-methyltransferase activity"/>
    <property type="evidence" value="ECO:0007669"/>
    <property type="project" value="UniProtKB-UniRule"/>
</dbReference>
<dbReference type="GO" id="GO:0002939">
    <property type="term" value="P:tRNA N1-guanine methylation"/>
    <property type="evidence" value="ECO:0007669"/>
    <property type="project" value="TreeGrafter"/>
</dbReference>
<dbReference type="CDD" id="cd18080">
    <property type="entry name" value="TrmD-like"/>
    <property type="match status" value="1"/>
</dbReference>
<dbReference type="FunFam" id="3.40.1280.10:FF:000001">
    <property type="entry name" value="tRNA (guanine-N(1)-)-methyltransferase"/>
    <property type="match status" value="1"/>
</dbReference>
<dbReference type="Gene3D" id="3.40.1280.10">
    <property type="match status" value="1"/>
</dbReference>
<dbReference type="Gene3D" id="1.10.1270.20">
    <property type="entry name" value="tRNA(m1g37)methyltransferase, domain 2"/>
    <property type="match status" value="1"/>
</dbReference>
<dbReference type="HAMAP" id="MF_00605">
    <property type="entry name" value="TrmD"/>
    <property type="match status" value="1"/>
</dbReference>
<dbReference type="InterPro" id="IPR029028">
    <property type="entry name" value="Alpha/beta_knot_MTases"/>
</dbReference>
<dbReference type="InterPro" id="IPR023148">
    <property type="entry name" value="tRNA_m1G_MeTrfase_C_sf"/>
</dbReference>
<dbReference type="InterPro" id="IPR002649">
    <property type="entry name" value="tRNA_m1G_MeTrfase_TrmD"/>
</dbReference>
<dbReference type="InterPro" id="IPR029026">
    <property type="entry name" value="tRNA_m1G_MTases_N"/>
</dbReference>
<dbReference type="InterPro" id="IPR016009">
    <property type="entry name" value="tRNA_MeTrfase_TRMD/TRM10"/>
</dbReference>
<dbReference type="NCBIfam" id="NF000648">
    <property type="entry name" value="PRK00026.1"/>
    <property type="match status" value="1"/>
</dbReference>
<dbReference type="NCBIfam" id="TIGR00088">
    <property type="entry name" value="trmD"/>
    <property type="match status" value="1"/>
</dbReference>
<dbReference type="PANTHER" id="PTHR46417">
    <property type="entry name" value="TRNA (GUANINE-N(1)-)-METHYLTRANSFERASE"/>
    <property type="match status" value="1"/>
</dbReference>
<dbReference type="PANTHER" id="PTHR46417:SF1">
    <property type="entry name" value="TRNA (GUANINE-N(1)-)-METHYLTRANSFERASE"/>
    <property type="match status" value="1"/>
</dbReference>
<dbReference type="Pfam" id="PF01746">
    <property type="entry name" value="tRNA_m1G_MT"/>
    <property type="match status" value="1"/>
</dbReference>
<dbReference type="PIRSF" id="PIRSF000386">
    <property type="entry name" value="tRNA_mtase"/>
    <property type="match status" value="1"/>
</dbReference>
<dbReference type="SUPFAM" id="SSF75217">
    <property type="entry name" value="alpha/beta knot"/>
    <property type="match status" value="1"/>
</dbReference>
<comment type="function">
    <text evidence="1">Specifically methylates guanosine-37 in various tRNAs.</text>
</comment>
<comment type="catalytic activity">
    <reaction evidence="1">
        <text>guanosine(37) in tRNA + S-adenosyl-L-methionine = N(1)-methylguanosine(37) in tRNA + S-adenosyl-L-homocysteine + H(+)</text>
        <dbReference type="Rhea" id="RHEA:36899"/>
        <dbReference type="Rhea" id="RHEA-COMP:10145"/>
        <dbReference type="Rhea" id="RHEA-COMP:10147"/>
        <dbReference type="ChEBI" id="CHEBI:15378"/>
        <dbReference type="ChEBI" id="CHEBI:57856"/>
        <dbReference type="ChEBI" id="CHEBI:59789"/>
        <dbReference type="ChEBI" id="CHEBI:73542"/>
        <dbReference type="ChEBI" id="CHEBI:74269"/>
        <dbReference type="EC" id="2.1.1.228"/>
    </reaction>
</comment>
<comment type="subunit">
    <text evidence="1">Homodimer.</text>
</comment>
<comment type="subcellular location">
    <subcellularLocation>
        <location evidence="1">Cytoplasm</location>
    </subcellularLocation>
</comment>
<comment type="similarity">
    <text evidence="1">Belongs to the RNA methyltransferase TrmD family.</text>
</comment>
<comment type="sequence caution" evidence="2">
    <conflict type="erroneous initiation">
        <sequence resource="EMBL-CDS" id="ABC92706"/>
    </conflict>
</comment>
<gene>
    <name evidence="1" type="primary">trmD</name>
    <name type="ordered locus">RHE_CH03961</name>
</gene>
<keyword id="KW-0963">Cytoplasm</keyword>
<keyword id="KW-0489">Methyltransferase</keyword>
<keyword id="KW-1185">Reference proteome</keyword>
<keyword id="KW-0949">S-adenosyl-L-methionine</keyword>
<keyword id="KW-0808">Transferase</keyword>
<keyword id="KW-0819">tRNA processing</keyword>
<proteinExistence type="inferred from homology"/>